<proteinExistence type="inferred from homology"/>
<keyword id="KW-0131">Cell cycle</keyword>
<keyword id="KW-0132">Cell division</keyword>
<keyword id="KW-0143">Chaperone</keyword>
<keyword id="KW-0963">Cytoplasm</keyword>
<keyword id="KW-0413">Isomerase</keyword>
<keyword id="KW-1185">Reference proteome</keyword>
<keyword id="KW-0697">Rotamase</keyword>
<organism>
    <name type="scientific">Streptococcus agalactiae serotype V (strain ATCC BAA-611 / 2603 V/R)</name>
    <dbReference type="NCBI Taxonomy" id="208435"/>
    <lineage>
        <taxon>Bacteria</taxon>
        <taxon>Bacillati</taxon>
        <taxon>Bacillota</taxon>
        <taxon>Bacilli</taxon>
        <taxon>Lactobacillales</taxon>
        <taxon>Streptococcaceae</taxon>
        <taxon>Streptococcus</taxon>
    </lineage>
</organism>
<name>TIG_STRA5</name>
<comment type="function">
    <text evidence="1">Involved in protein export. Acts as a chaperone by maintaining the newly synthesized protein in an open conformation. Functions as a peptidyl-prolyl cis-trans isomerase.</text>
</comment>
<comment type="catalytic activity">
    <reaction evidence="1">
        <text>[protein]-peptidylproline (omega=180) = [protein]-peptidylproline (omega=0)</text>
        <dbReference type="Rhea" id="RHEA:16237"/>
        <dbReference type="Rhea" id="RHEA-COMP:10747"/>
        <dbReference type="Rhea" id="RHEA-COMP:10748"/>
        <dbReference type="ChEBI" id="CHEBI:83833"/>
        <dbReference type="ChEBI" id="CHEBI:83834"/>
        <dbReference type="EC" id="5.2.1.8"/>
    </reaction>
</comment>
<comment type="subcellular location">
    <subcellularLocation>
        <location>Cytoplasm</location>
    </subcellularLocation>
    <text evidence="1">About half TF is bound to the ribosome near the polypeptide exit tunnel while the other half is free in the cytoplasm.</text>
</comment>
<comment type="domain">
    <text evidence="1">Consists of 3 domains; the N-terminus binds the ribosome, the middle domain has PPIase activity, while the C-terminus has intrinsic chaperone activity on its own.</text>
</comment>
<comment type="similarity">
    <text evidence="1">Belongs to the FKBP-type PPIase family. Tig subfamily.</text>
</comment>
<accession>Q8E292</accession>
<feature type="chain" id="PRO_0000179434" description="Trigger factor">
    <location>
        <begin position="1"/>
        <end position="427"/>
    </location>
</feature>
<feature type="domain" description="PPIase FKBP-type" evidence="1">
    <location>
        <begin position="163"/>
        <end position="248"/>
    </location>
</feature>
<gene>
    <name evidence="1" type="primary">tig</name>
    <name type="ordered locus">SAG0105</name>
</gene>
<reference key="1">
    <citation type="journal article" date="2002" name="Proc. Natl. Acad. Sci. U.S.A.">
        <title>Complete genome sequence and comparative genomic analysis of an emerging human pathogen, serotype V Streptococcus agalactiae.</title>
        <authorList>
            <person name="Tettelin H."/>
            <person name="Masignani V."/>
            <person name="Cieslewicz M.J."/>
            <person name="Eisen J.A."/>
            <person name="Peterson S.N."/>
            <person name="Wessels M.R."/>
            <person name="Paulsen I.T."/>
            <person name="Nelson K.E."/>
            <person name="Margarit I."/>
            <person name="Read T.D."/>
            <person name="Madoff L.C."/>
            <person name="Wolf A.M."/>
            <person name="Beanan M.J."/>
            <person name="Brinkac L.M."/>
            <person name="Daugherty S.C."/>
            <person name="DeBoy R.T."/>
            <person name="Durkin A.S."/>
            <person name="Kolonay J.F."/>
            <person name="Madupu R."/>
            <person name="Lewis M.R."/>
            <person name="Radune D."/>
            <person name="Fedorova N.B."/>
            <person name="Scanlan D."/>
            <person name="Khouri H.M."/>
            <person name="Mulligan S."/>
            <person name="Carty H.A."/>
            <person name="Cline R.T."/>
            <person name="Van Aken S.E."/>
            <person name="Gill J."/>
            <person name="Scarselli M."/>
            <person name="Mora M."/>
            <person name="Iacobini E.T."/>
            <person name="Brettoni C."/>
            <person name="Galli G."/>
            <person name="Mariani M."/>
            <person name="Vegni F."/>
            <person name="Maione D."/>
            <person name="Rinaudo D."/>
            <person name="Rappuoli R."/>
            <person name="Telford J.L."/>
            <person name="Kasper D.L."/>
            <person name="Grandi G."/>
            <person name="Fraser C.M."/>
        </authorList>
    </citation>
    <scope>NUCLEOTIDE SEQUENCE [LARGE SCALE GENOMIC DNA]</scope>
    <source>
        <strain>ATCC BAA-611 / 2603 V/R</strain>
    </source>
</reference>
<dbReference type="EC" id="5.2.1.8" evidence="1"/>
<dbReference type="EMBL" id="AE009948">
    <property type="protein sequence ID" value="AAM99013.1"/>
    <property type="molecule type" value="Genomic_DNA"/>
</dbReference>
<dbReference type="RefSeq" id="NP_687141.1">
    <property type="nucleotide sequence ID" value="NC_004116.1"/>
</dbReference>
<dbReference type="RefSeq" id="WP_000107750.1">
    <property type="nucleotide sequence ID" value="NC_004116.1"/>
</dbReference>
<dbReference type="SMR" id="Q8E292"/>
<dbReference type="STRING" id="208435.SAG0105"/>
<dbReference type="KEGG" id="sag:SAG0105"/>
<dbReference type="PATRIC" id="fig|208435.3.peg.104"/>
<dbReference type="HOGENOM" id="CLU_033058_3_2_9"/>
<dbReference type="OrthoDB" id="9767721at2"/>
<dbReference type="Proteomes" id="UP000000821">
    <property type="component" value="Chromosome"/>
</dbReference>
<dbReference type="GO" id="GO:0005737">
    <property type="term" value="C:cytoplasm"/>
    <property type="evidence" value="ECO:0007669"/>
    <property type="project" value="UniProtKB-SubCell"/>
</dbReference>
<dbReference type="GO" id="GO:0003755">
    <property type="term" value="F:peptidyl-prolyl cis-trans isomerase activity"/>
    <property type="evidence" value="ECO:0007669"/>
    <property type="project" value="UniProtKB-UniRule"/>
</dbReference>
<dbReference type="GO" id="GO:0044183">
    <property type="term" value="F:protein folding chaperone"/>
    <property type="evidence" value="ECO:0007669"/>
    <property type="project" value="TreeGrafter"/>
</dbReference>
<dbReference type="GO" id="GO:0043022">
    <property type="term" value="F:ribosome binding"/>
    <property type="evidence" value="ECO:0007669"/>
    <property type="project" value="TreeGrafter"/>
</dbReference>
<dbReference type="GO" id="GO:0051083">
    <property type="term" value="P:'de novo' cotranslational protein folding"/>
    <property type="evidence" value="ECO:0007669"/>
    <property type="project" value="TreeGrafter"/>
</dbReference>
<dbReference type="GO" id="GO:0051301">
    <property type="term" value="P:cell division"/>
    <property type="evidence" value="ECO:0007669"/>
    <property type="project" value="UniProtKB-KW"/>
</dbReference>
<dbReference type="GO" id="GO:0061077">
    <property type="term" value="P:chaperone-mediated protein folding"/>
    <property type="evidence" value="ECO:0007669"/>
    <property type="project" value="TreeGrafter"/>
</dbReference>
<dbReference type="GO" id="GO:0015031">
    <property type="term" value="P:protein transport"/>
    <property type="evidence" value="ECO:0007669"/>
    <property type="project" value="UniProtKB-UniRule"/>
</dbReference>
<dbReference type="GO" id="GO:0043335">
    <property type="term" value="P:protein unfolding"/>
    <property type="evidence" value="ECO:0007669"/>
    <property type="project" value="TreeGrafter"/>
</dbReference>
<dbReference type="FunFam" id="3.10.50.40:FF:000001">
    <property type="entry name" value="Trigger factor"/>
    <property type="match status" value="1"/>
</dbReference>
<dbReference type="Gene3D" id="3.10.50.40">
    <property type="match status" value="1"/>
</dbReference>
<dbReference type="Gene3D" id="3.30.70.1050">
    <property type="entry name" value="Trigger factor ribosome-binding domain"/>
    <property type="match status" value="1"/>
</dbReference>
<dbReference type="Gene3D" id="1.10.3120.10">
    <property type="entry name" value="Trigger factor, C-terminal domain"/>
    <property type="match status" value="1"/>
</dbReference>
<dbReference type="HAMAP" id="MF_00303">
    <property type="entry name" value="Trigger_factor_Tig"/>
    <property type="match status" value="1"/>
</dbReference>
<dbReference type="InterPro" id="IPR046357">
    <property type="entry name" value="PPIase_dom_sf"/>
</dbReference>
<dbReference type="InterPro" id="IPR001179">
    <property type="entry name" value="PPIase_FKBP_dom"/>
</dbReference>
<dbReference type="InterPro" id="IPR005215">
    <property type="entry name" value="Trig_fac"/>
</dbReference>
<dbReference type="InterPro" id="IPR008880">
    <property type="entry name" value="Trigger_fac_C"/>
</dbReference>
<dbReference type="InterPro" id="IPR037041">
    <property type="entry name" value="Trigger_fac_C_sf"/>
</dbReference>
<dbReference type="InterPro" id="IPR008881">
    <property type="entry name" value="Trigger_fac_ribosome-bd_bac"/>
</dbReference>
<dbReference type="InterPro" id="IPR036611">
    <property type="entry name" value="Trigger_fac_ribosome-bd_sf"/>
</dbReference>
<dbReference type="InterPro" id="IPR027304">
    <property type="entry name" value="Trigger_fact/SurA_dom_sf"/>
</dbReference>
<dbReference type="NCBIfam" id="TIGR00115">
    <property type="entry name" value="tig"/>
    <property type="match status" value="1"/>
</dbReference>
<dbReference type="PANTHER" id="PTHR30560">
    <property type="entry name" value="TRIGGER FACTOR CHAPERONE AND PEPTIDYL-PROLYL CIS/TRANS ISOMERASE"/>
    <property type="match status" value="1"/>
</dbReference>
<dbReference type="PANTHER" id="PTHR30560:SF3">
    <property type="entry name" value="TRIGGER FACTOR-LIKE PROTEIN TIG, CHLOROPLASTIC"/>
    <property type="match status" value="1"/>
</dbReference>
<dbReference type="Pfam" id="PF00254">
    <property type="entry name" value="FKBP_C"/>
    <property type="match status" value="1"/>
</dbReference>
<dbReference type="Pfam" id="PF05698">
    <property type="entry name" value="Trigger_C"/>
    <property type="match status" value="1"/>
</dbReference>
<dbReference type="Pfam" id="PF05697">
    <property type="entry name" value="Trigger_N"/>
    <property type="match status" value="1"/>
</dbReference>
<dbReference type="PIRSF" id="PIRSF003095">
    <property type="entry name" value="Trigger_factor"/>
    <property type="match status" value="1"/>
</dbReference>
<dbReference type="SUPFAM" id="SSF54534">
    <property type="entry name" value="FKBP-like"/>
    <property type="match status" value="1"/>
</dbReference>
<dbReference type="SUPFAM" id="SSF109998">
    <property type="entry name" value="Triger factor/SurA peptide-binding domain-like"/>
    <property type="match status" value="1"/>
</dbReference>
<dbReference type="SUPFAM" id="SSF102735">
    <property type="entry name" value="Trigger factor ribosome-binding domain"/>
    <property type="match status" value="1"/>
</dbReference>
<dbReference type="PROSITE" id="PS50059">
    <property type="entry name" value="FKBP_PPIASE"/>
    <property type="match status" value="1"/>
</dbReference>
<protein>
    <recommendedName>
        <fullName evidence="1">Trigger factor</fullName>
        <shortName evidence="1">TF</shortName>
        <ecNumber evidence="1">5.2.1.8</ecNumber>
    </recommendedName>
    <alternativeName>
        <fullName evidence="1">PPIase</fullName>
    </alternativeName>
</protein>
<evidence type="ECO:0000255" key="1">
    <source>
        <dbReference type="HAMAP-Rule" id="MF_00303"/>
    </source>
</evidence>
<sequence>MSTSFENKATNRGIITFTISQDEIKPALDQAFNKVKKDLNVPGFRKGHMPRTVFNQKFGEEALYENALNLVLPKAYEAAVAELGLDVVAQPKIDVVSMEKGQDWKLTAEVVTKPEVKLGDYKDLSVEVDASKEVSDEEVDAKVERERNNLAELTVKDGEAAQGDTVVIDFVGSVDGVEFDGGKGDNFSLELGSGQFIPGFEEQLVGSKAGQTVDVNVTFPEDYQAEDLAGKDAKFVTTIHEVKTKEVPALDDELAKDIDDEVETLDELKAKYRKELESAKEIAFDDAVEGAAIELAVANAEIVELPEEMVHDEVHRAMNEFMGNMQRQGISPEMYFQLTGTTEEDLHKQYQADADKRVKTNLVIEAIAAAEGFEATDEEIEKEITDLASEYNMEADQVRGLLSADMLKHDIAMKKAVDVITSSATVK</sequence>